<dbReference type="EMBL" id="CP000116">
    <property type="protein sequence ID" value="AAZ96349.1"/>
    <property type="molecule type" value="Genomic_DNA"/>
</dbReference>
<dbReference type="RefSeq" id="WP_011310909.1">
    <property type="nucleotide sequence ID" value="NC_007404.1"/>
</dbReference>
<dbReference type="SMR" id="Q3SLQ8"/>
<dbReference type="STRING" id="292415.Tbd_0396"/>
<dbReference type="KEGG" id="tbd:Tbd_0396"/>
<dbReference type="eggNOG" id="COG0244">
    <property type="taxonomic scope" value="Bacteria"/>
</dbReference>
<dbReference type="HOGENOM" id="CLU_092227_0_1_4"/>
<dbReference type="OrthoDB" id="9808307at2"/>
<dbReference type="Proteomes" id="UP000008291">
    <property type="component" value="Chromosome"/>
</dbReference>
<dbReference type="GO" id="GO:1990904">
    <property type="term" value="C:ribonucleoprotein complex"/>
    <property type="evidence" value="ECO:0007669"/>
    <property type="project" value="UniProtKB-KW"/>
</dbReference>
<dbReference type="GO" id="GO:0005840">
    <property type="term" value="C:ribosome"/>
    <property type="evidence" value="ECO:0007669"/>
    <property type="project" value="UniProtKB-KW"/>
</dbReference>
<dbReference type="GO" id="GO:0070180">
    <property type="term" value="F:large ribosomal subunit rRNA binding"/>
    <property type="evidence" value="ECO:0007669"/>
    <property type="project" value="UniProtKB-UniRule"/>
</dbReference>
<dbReference type="GO" id="GO:0006412">
    <property type="term" value="P:translation"/>
    <property type="evidence" value="ECO:0007669"/>
    <property type="project" value="UniProtKB-UniRule"/>
</dbReference>
<dbReference type="CDD" id="cd05797">
    <property type="entry name" value="Ribosomal_L10"/>
    <property type="match status" value="1"/>
</dbReference>
<dbReference type="Gene3D" id="3.30.70.1730">
    <property type="match status" value="1"/>
</dbReference>
<dbReference type="Gene3D" id="6.10.250.290">
    <property type="match status" value="1"/>
</dbReference>
<dbReference type="HAMAP" id="MF_00362">
    <property type="entry name" value="Ribosomal_uL10"/>
    <property type="match status" value="1"/>
</dbReference>
<dbReference type="InterPro" id="IPR001790">
    <property type="entry name" value="Ribosomal_uL10"/>
</dbReference>
<dbReference type="InterPro" id="IPR043141">
    <property type="entry name" value="Ribosomal_uL10-like_sf"/>
</dbReference>
<dbReference type="InterPro" id="IPR022973">
    <property type="entry name" value="Ribosomal_uL10_bac"/>
</dbReference>
<dbReference type="InterPro" id="IPR047865">
    <property type="entry name" value="Ribosomal_uL10_bac_type"/>
</dbReference>
<dbReference type="NCBIfam" id="NF000955">
    <property type="entry name" value="PRK00099.1-1"/>
    <property type="match status" value="1"/>
</dbReference>
<dbReference type="PANTHER" id="PTHR11560">
    <property type="entry name" value="39S RIBOSOMAL PROTEIN L10, MITOCHONDRIAL"/>
    <property type="match status" value="1"/>
</dbReference>
<dbReference type="Pfam" id="PF00466">
    <property type="entry name" value="Ribosomal_L10"/>
    <property type="match status" value="1"/>
</dbReference>
<dbReference type="SUPFAM" id="SSF160369">
    <property type="entry name" value="Ribosomal protein L10-like"/>
    <property type="match status" value="1"/>
</dbReference>
<reference key="1">
    <citation type="journal article" date="2006" name="J. Bacteriol.">
        <title>The genome sequence of the obligately chemolithoautotrophic, facultatively anaerobic bacterium Thiobacillus denitrificans.</title>
        <authorList>
            <person name="Beller H.R."/>
            <person name="Chain P.S."/>
            <person name="Letain T.E."/>
            <person name="Chakicherla A."/>
            <person name="Larimer F.W."/>
            <person name="Richardson P.M."/>
            <person name="Coleman M.A."/>
            <person name="Wood A.P."/>
            <person name="Kelly D.P."/>
        </authorList>
    </citation>
    <scope>NUCLEOTIDE SEQUENCE [LARGE SCALE GENOMIC DNA]</scope>
    <source>
        <strain>ATCC 25259 / T1</strain>
    </source>
</reference>
<protein>
    <recommendedName>
        <fullName evidence="1">Large ribosomal subunit protein uL10</fullName>
    </recommendedName>
    <alternativeName>
        <fullName evidence="2">50S ribosomal protein L10</fullName>
    </alternativeName>
</protein>
<name>RL10_THIDA</name>
<sequence length="173" mass="18652">MSLNLEEKKAVVAEVAAQVAAAQTVVVAEYRGIAVEDMTQLRVKARKEGVYLRVLKNTLVRRAVADTPFAGIADQLVGPLAYGISKDPVAAAKVMHEFSKTNDKFVVKAGAMPNFLMSPKDVGNLASMPSREELLSKLLGTMQAPIAQFVRTLNEVPTKFVRGLAAVRDKQAA</sequence>
<feature type="chain" id="PRO_0000234903" description="Large ribosomal subunit protein uL10">
    <location>
        <begin position="1"/>
        <end position="173"/>
    </location>
</feature>
<comment type="function">
    <text evidence="1">Forms part of the ribosomal stalk, playing a central role in the interaction of the ribosome with GTP-bound translation factors.</text>
</comment>
<comment type="subunit">
    <text evidence="1">Part of the ribosomal stalk of the 50S ribosomal subunit. The N-terminus interacts with L11 and the large rRNA to form the base of the stalk. The C-terminus forms an elongated spine to which L12 dimers bind in a sequential fashion forming a multimeric L10(L12)X complex.</text>
</comment>
<comment type="similarity">
    <text evidence="1">Belongs to the universal ribosomal protein uL10 family.</text>
</comment>
<accession>Q3SLQ8</accession>
<gene>
    <name evidence="1" type="primary">rplJ</name>
    <name type="ordered locus">Tbd_0396</name>
</gene>
<organism>
    <name type="scientific">Thiobacillus denitrificans (strain ATCC 25259 / T1)</name>
    <dbReference type="NCBI Taxonomy" id="292415"/>
    <lineage>
        <taxon>Bacteria</taxon>
        <taxon>Pseudomonadati</taxon>
        <taxon>Pseudomonadota</taxon>
        <taxon>Betaproteobacteria</taxon>
        <taxon>Nitrosomonadales</taxon>
        <taxon>Thiobacillaceae</taxon>
        <taxon>Thiobacillus</taxon>
    </lineage>
</organism>
<proteinExistence type="inferred from homology"/>
<evidence type="ECO:0000255" key="1">
    <source>
        <dbReference type="HAMAP-Rule" id="MF_00362"/>
    </source>
</evidence>
<evidence type="ECO:0000305" key="2"/>
<keyword id="KW-1185">Reference proteome</keyword>
<keyword id="KW-0687">Ribonucleoprotein</keyword>
<keyword id="KW-0689">Ribosomal protein</keyword>
<keyword id="KW-0694">RNA-binding</keyword>
<keyword id="KW-0699">rRNA-binding</keyword>